<reference key="1">
    <citation type="submission" date="2004-11" db="EMBL/GenBank/DDBJ databases">
        <authorList>
            <consortium name="The German cDNA consortium"/>
        </authorList>
    </citation>
    <scope>NUCLEOTIDE SEQUENCE [LARGE SCALE MRNA]</scope>
    <source>
        <tissue>Brain cortex</tissue>
    </source>
</reference>
<organism>
    <name type="scientific">Pongo abelii</name>
    <name type="common">Sumatran orangutan</name>
    <name type="synonym">Pongo pygmaeus abelii</name>
    <dbReference type="NCBI Taxonomy" id="9601"/>
    <lineage>
        <taxon>Eukaryota</taxon>
        <taxon>Metazoa</taxon>
        <taxon>Chordata</taxon>
        <taxon>Craniata</taxon>
        <taxon>Vertebrata</taxon>
        <taxon>Euteleostomi</taxon>
        <taxon>Mammalia</taxon>
        <taxon>Eutheria</taxon>
        <taxon>Euarchontoglires</taxon>
        <taxon>Primates</taxon>
        <taxon>Haplorrhini</taxon>
        <taxon>Catarrhini</taxon>
        <taxon>Hominidae</taxon>
        <taxon>Pongo</taxon>
    </lineage>
</organism>
<sequence length="286" mass="32936">MADFDDRVSDEEKVRIAAKFITHAPPGEFNEVFNDVRLLLNNDNLLREGAAHAFALYNMDQFTPVKIEGYEDQVLITEHGDLGNSRFLDPRNKISFKFDHLRKEASDPQPEEVDGGLKSWRESCDSALRAYVKDHYSNGFCTVYAKTIDGQQTIIACIESHQFQPKNFWNGRWRSEWKFTITPPTAQVVGVLKIQVHYYEDGNVQLVSHKDVQDSLTVSNEAQTAKEFIKIIENAENEYQTAISENYQTMSDTTFKALRRQLPVTRTKIDWNKILSYKIGKEMQNA</sequence>
<protein>
    <recommendedName>
        <fullName>F-actin-capping protein subunit alpha-1</fullName>
    </recommendedName>
    <alternativeName>
        <fullName>CapZ alpha-1</fullName>
    </alternativeName>
</protein>
<comment type="function">
    <text evidence="2 3">F-actin-capping proteins bind in a Ca(2+)-independent manner to the fast growing ends of actin filaments (barbed end) thereby blocking the exchange of subunits at these ends. Unlike other capping proteins (such as gelsolin and severin), these proteins do not sever actin filaments. May play a role in the formation of epithelial cell junctions (By similarity). Forms, with CAPZB, the barbed end of the fast growing ends of actin filaments in the dynactin complex and stabilizes dynactin structure. The dynactin multiprotein complex activates the molecular motor dynein for ultra-processive transport along microtubules (By similarity).</text>
</comment>
<comment type="subunit">
    <text evidence="1 2 3">Component of the F-actin capping complex, composed of a heterodimer of an alpha and a beta subunit. Subunit of dynactin, a multiprotein complex part of a tripartite complex with dynein and a adapter, such as BICDL1, BICD2 or HOOK3. The dynactin complex is built around ACTR1A/ACTB filament and consists of an actin-related filament composed of a shoulder domain, a pointed end and a barbed end. Its length is defined by its flexible shoulder domain. The soulder is composed of 2 DCTN1 subunits, 4 DCTN2 and 2 DCTN3. The 4 DCNT2 (via N-terminus) bind the ACTR1A filament and act as molecular rulers to determine the length. The pointed end is important for binding dynein-dynactin cargo adapters. Consists of 4 subunits: ACTR10, DCNT4, DCTN5 and DCTN6. The barbed end is composed of a CAPZA1:CAPZB heterodimers, which binds ACTR1A/ACTB filament and dynactin and stabilizes dynactin (By similarity). Component of the WASH complex, composed of F-actin-capping protein subunit alpha (CAPZA1, CAPZA2 or CAPZA3), F-actin-capping protein subunit beta (CAPZB), WASH (WASHC1, WASH2P, WASH3P, WASH4P, WASH5P or WASH6P), WASHC2 (WASHC2A or WASHC2C), WASHC3, WASHC4 and WASHC5. Interacts with S100A (By similarity). Interacts with S100B. Interacts with SH3BP1; recruits CAPZA1 to forming cell junctions. Interacts with CD2AP. Directly interacts with CRACD; this interaction decreases binding to actin (By similarity).</text>
</comment>
<comment type="subcellular location">
    <subcellularLocation>
        <location evidence="2">Cytoplasm</location>
        <location evidence="2">Cytoskeleton</location>
    </subcellularLocation>
</comment>
<comment type="similarity">
    <text evidence="4">Belongs to the F-actin-capping protein alpha subunit family.</text>
</comment>
<proteinExistence type="evidence at transcript level"/>
<evidence type="ECO:0000250" key="1"/>
<evidence type="ECO:0000250" key="2">
    <source>
        <dbReference type="UniProtKB" id="A0PFK5"/>
    </source>
</evidence>
<evidence type="ECO:0000250" key="3">
    <source>
        <dbReference type="UniProtKB" id="P52907"/>
    </source>
</evidence>
<evidence type="ECO:0000305" key="4"/>
<name>CAZA1_PONAB</name>
<dbReference type="EMBL" id="CR926005">
    <property type="protein sequence ID" value="CAI29643.1"/>
    <property type="molecule type" value="mRNA"/>
</dbReference>
<dbReference type="RefSeq" id="NP_001127090.1">
    <property type="nucleotide sequence ID" value="NM_001133618.1"/>
</dbReference>
<dbReference type="SMR" id="Q5NVM0"/>
<dbReference type="STRING" id="9601.ENSPPYP00000001189"/>
<dbReference type="GeneID" id="100174121"/>
<dbReference type="KEGG" id="pon:100174121"/>
<dbReference type="CTD" id="829"/>
<dbReference type="eggNOG" id="KOG0836">
    <property type="taxonomic scope" value="Eukaryota"/>
</dbReference>
<dbReference type="InParanoid" id="Q5NVM0"/>
<dbReference type="OrthoDB" id="340550at2759"/>
<dbReference type="Proteomes" id="UP000001595">
    <property type="component" value="Unplaced"/>
</dbReference>
<dbReference type="GO" id="GO:0030863">
    <property type="term" value="C:cortical cytoskeleton"/>
    <property type="evidence" value="ECO:0007669"/>
    <property type="project" value="TreeGrafter"/>
</dbReference>
<dbReference type="GO" id="GO:0008290">
    <property type="term" value="C:F-actin capping protein complex"/>
    <property type="evidence" value="ECO:0007669"/>
    <property type="project" value="InterPro"/>
</dbReference>
<dbReference type="GO" id="GO:0071203">
    <property type="term" value="C:WASH complex"/>
    <property type="evidence" value="ECO:0000250"/>
    <property type="project" value="UniProtKB"/>
</dbReference>
<dbReference type="GO" id="GO:0051015">
    <property type="term" value="F:actin filament binding"/>
    <property type="evidence" value="ECO:0007669"/>
    <property type="project" value="TreeGrafter"/>
</dbReference>
<dbReference type="GO" id="GO:0030036">
    <property type="term" value="P:actin cytoskeleton organization"/>
    <property type="evidence" value="ECO:0007669"/>
    <property type="project" value="TreeGrafter"/>
</dbReference>
<dbReference type="GO" id="GO:0051016">
    <property type="term" value="P:barbed-end actin filament capping"/>
    <property type="evidence" value="ECO:0007669"/>
    <property type="project" value="InterPro"/>
</dbReference>
<dbReference type="GO" id="GO:0034329">
    <property type="term" value="P:cell junction assembly"/>
    <property type="evidence" value="ECO:0000250"/>
    <property type="project" value="UniProtKB"/>
</dbReference>
<dbReference type="FunFam" id="3.30.1140.60:FF:000001">
    <property type="entry name" value="F-actin-capping protein subunit alpha"/>
    <property type="match status" value="1"/>
</dbReference>
<dbReference type="FunFam" id="3.90.1150.210:FF:000002">
    <property type="entry name" value="F-actin-capping protein subunit alpha"/>
    <property type="match status" value="1"/>
</dbReference>
<dbReference type="Gene3D" id="3.30.1140.60">
    <property type="entry name" value="F-actin capping protein, alpha subunit"/>
    <property type="match status" value="1"/>
</dbReference>
<dbReference type="Gene3D" id="3.90.1150.210">
    <property type="entry name" value="F-actin capping protein, beta subunit"/>
    <property type="match status" value="1"/>
</dbReference>
<dbReference type="InterPro" id="IPR002189">
    <property type="entry name" value="CapZ_alpha"/>
</dbReference>
<dbReference type="InterPro" id="IPR037282">
    <property type="entry name" value="CapZ_alpha/beta"/>
</dbReference>
<dbReference type="InterPro" id="IPR042276">
    <property type="entry name" value="CapZ_alpha/beta_2"/>
</dbReference>
<dbReference type="InterPro" id="IPR042489">
    <property type="entry name" value="CapZ_alpha_1"/>
</dbReference>
<dbReference type="InterPro" id="IPR017865">
    <property type="entry name" value="F-actin_cap_asu_CS"/>
</dbReference>
<dbReference type="PANTHER" id="PTHR10653">
    <property type="entry name" value="F-ACTIN-CAPPING PROTEIN SUBUNIT ALPHA"/>
    <property type="match status" value="1"/>
</dbReference>
<dbReference type="PANTHER" id="PTHR10653:SF5">
    <property type="entry name" value="F-ACTIN-CAPPING PROTEIN SUBUNIT ALPHA-1"/>
    <property type="match status" value="1"/>
</dbReference>
<dbReference type="Pfam" id="PF01267">
    <property type="entry name" value="F-actin_cap_A"/>
    <property type="match status" value="1"/>
</dbReference>
<dbReference type="PRINTS" id="PR00191">
    <property type="entry name" value="FACTINCAPA"/>
</dbReference>
<dbReference type="SUPFAM" id="SSF90096">
    <property type="entry name" value="Subunits of heterodimeric actin filament capping protein Capz"/>
    <property type="match status" value="1"/>
</dbReference>
<dbReference type="PROSITE" id="PS00748">
    <property type="entry name" value="F_ACTIN_CAPPING_A_1"/>
    <property type="match status" value="1"/>
</dbReference>
<dbReference type="PROSITE" id="PS00749">
    <property type="entry name" value="F_ACTIN_CAPPING_A_2"/>
    <property type="match status" value="1"/>
</dbReference>
<gene>
    <name type="primary">CAPZA1</name>
</gene>
<keyword id="KW-0007">Acetylation</keyword>
<keyword id="KW-0117">Actin capping</keyword>
<keyword id="KW-0009">Actin-binding</keyword>
<keyword id="KW-0963">Cytoplasm</keyword>
<keyword id="KW-0206">Cytoskeleton</keyword>
<keyword id="KW-0597">Phosphoprotein</keyword>
<keyword id="KW-1185">Reference proteome</keyword>
<feature type="initiator methionine" description="Removed" evidence="3">
    <location>
        <position position="1"/>
    </location>
</feature>
<feature type="chain" id="PRO_0000208626" description="F-actin-capping protein subunit alpha-1">
    <location>
        <begin position="2"/>
        <end position="286"/>
    </location>
</feature>
<feature type="modified residue" description="N-acetylalanine" evidence="3">
    <location>
        <position position="2"/>
    </location>
</feature>
<feature type="modified residue" description="Phosphoserine" evidence="3">
    <location>
        <position position="9"/>
    </location>
</feature>
<feature type="modified residue" description="N6-acetyllysine" evidence="3">
    <location>
        <position position="19"/>
    </location>
</feature>
<feature type="modified residue" description="N6-acetyllysine" evidence="3">
    <location>
        <position position="97"/>
    </location>
</feature>
<accession>Q5NVM0</accession>